<sequence>MISRSALSRGSQLALRRPAAAKTAQRGFAAAAASPAASYEPTTIAGVKVASRDDSGPTTRLAVVAKAGTRYEPLPGLTVGLEEFAFKNTNKRTALRITRESELLGGQLQAYHTREAVVLQASFLREDLPYFTELLAEVISETKYTTHEFHELVENCIHEKQAKLDSAAIALDAAHNVAFHSGLGSPLYPTVDTPTSSYLNENSVAAFANLAYNKANIAVVADGASQAGLEKWVEPFFKGVPATSSGNLNTAASKYFGGEQRVAKNGKNAIVIAFPGASLGVPHPETSVLVGLLGGVSNIKWSPGFSLLAKATAANPGAEAFAHNYAYSDAGLLAIQITGKGAAVGKVAVEAVKGLKAIAAGGVSKEDLTKAIAKAKFNLLSASEVSGTGLVHAGANLLAGGKPIQVAETLKALEGVTAEKLQAAAKKLLEGKASVSAVGDLHVLPYAEDLGLKV</sequence>
<accession>O60044</accession>
<accession>Q7RWQ2</accession>
<accession>Q8WZH3</accession>
<gene>
    <name type="primary">ucr-1</name>
    <name type="ORF">B7N14.100</name>
    <name type="ORF">NCU03559</name>
</gene>
<feature type="transit peptide" description="Mitochondrion" evidence="2">
    <location>
        <begin position="1"/>
        <end position="35"/>
    </location>
</feature>
<feature type="chain" id="PRO_0000026798" description="Cytochrome b-c1 complex subunit 2, mitochondrial">
    <location>
        <begin position="36"/>
        <end position="454"/>
    </location>
</feature>
<feature type="sequence conflict" description="In Ref. 1; CAA70067." evidence="11" ref="1">
    <original>S</original>
    <variation>L</variation>
    <location>
        <position position="8"/>
    </location>
</feature>
<feature type="sequence conflict" description="In Ref. 1; CAA70067." evidence="11" ref="1">
    <original>V</original>
    <variation>G</variation>
    <location>
        <position position="63"/>
    </location>
</feature>
<feature type="sequence conflict" description="In Ref. 1; CAA70067." evidence="11" ref="1">
    <original>P</original>
    <variation>A</variation>
    <location>
        <position position="75"/>
    </location>
</feature>
<name>QCR2_NEUCR</name>
<evidence type="ECO:0000250" key="1">
    <source>
        <dbReference type="UniProtKB" id="P07257"/>
    </source>
</evidence>
<evidence type="ECO:0000255" key="2"/>
<evidence type="ECO:0000269" key="3">
    <source>
    </source>
</evidence>
<evidence type="ECO:0000269" key="4">
    <source>
    </source>
</evidence>
<evidence type="ECO:0000269" key="5">
    <source>
    </source>
</evidence>
<evidence type="ECO:0000269" key="6">
    <source>
    </source>
</evidence>
<evidence type="ECO:0000269" key="7">
    <source>
    </source>
</evidence>
<evidence type="ECO:0000269" key="8">
    <source>
    </source>
</evidence>
<evidence type="ECO:0000269" key="9">
    <source>
    </source>
</evidence>
<evidence type="ECO:0000303" key="10">
    <source>
    </source>
</evidence>
<evidence type="ECO:0000305" key="11"/>
<evidence type="ECO:0000305" key="12">
    <source>
    </source>
</evidence>
<evidence type="ECO:0000305" key="13">
    <source>
    </source>
</evidence>
<dbReference type="EMBL" id="Y08841">
    <property type="protein sequence ID" value="CAA70067.1"/>
    <property type="molecule type" value="mRNA"/>
</dbReference>
<dbReference type="EMBL" id="AL669986">
    <property type="protein sequence ID" value="CAD21046.1"/>
    <property type="molecule type" value="Genomic_DNA"/>
</dbReference>
<dbReference type="EMBL" id="CM002237">
    <property type="protein sequence ID" value="EAA26886.2"/>
    <property type="molecule type" value="Genomic_DNA"/>
</dbReference>
<dbReference type="PIR" id="T47253">
    <property type="entry name" value="T47253"/>
</dbReference>
<dbReference type="RefSeq" id="XP_956122.2">
    <property type="nucleotide sequence ID" value="XM_951029.3"/>
</dbReference>
<dbReference type="SMR" id="O60044"/>
<dbReference type="FunCoup" id="O60044">
    <property type="interactions" value="284"/>
</dbReference>
<dbReference type="STRING" id="367110.O60044"/>
<dbReference type="PaxDb" id="5141-EFNCRP00000002612"/>
<dbReference type="EnsemblFungi" id="EAA26886">
    <property type="protein sequence ID" value="EAA26886"/>
    <property type="gene ID" value="NCU03559"/>
</dbReference>
<dbReference type="GeneID" id="3872277"/>
<dbReference type="KEGG" id="ncr:NCU03559"/>
<dbReference type="VEuPathDB" id="FungiDB:NCU03559"/>
<dbReference type="HOGENOM" id="CLU_009902_0_1_1"/>
<dbReference type="InParanoid" id="O60044"/>
<dbReference type="OMA" id="APKFALY"/>
<dbReference type="OrthoDB" id="6369905at2759"/>
<dbReference type="Proteomes" id="UP000001805">
    <property type="component" value="Chromosome 6, Linkage Group II"/>
</dbReference>
<dbReference type="GO" id="GO:0005743">
    <property type="term" value="C:mitochondrial inner membrane"/>
    <property type="evidence" value="ECO:0007669"/>
    <property type="project" value="UniProtKB-SubCell"/>
</dbReference>
<dbReference type="GO" id="GO:0005739">
    <property type="term" value="C:mitochondrion"/>
    <property type="evidence" value="ECO:0000318"/>
    <property type="project" value="GO_Central"/>
</dbReference>
<dbReference type="GO" id="GO:0046872">
    <property type="term" value="F:metal ion binding"/>
    <property type="evidence" value="ECO:0007669"/>
    <property type="project" value="InterPro"/>
</dbReference>
<dbReference type="FunFam" id="3.30.830.10:FF:000021">
    <property type="entry name" value="Cytochrome b-c1 complex subunit 2"/>
    <property type="match status" value="1"/>
</dbReference>
<dbReference type="FunFam" id="3.30.830.10:FF:000039">
    <property type="entry name" value="Ubiquinol-cytochrome c reductase core subunit 2"/>
    <property type="match status" value="1"/>
</dbReference>
<dbReference type="Gene3D" id="3.30.830.10">
    <property type="entry name" value="Metalloenzyme, LuxS/M16 peptidase-like"/>
    <property type="match status" value="2"/>
</dbReference>
<dbReference type="InterPro" id="IPR011249">
    <property type="entry name" value="Metalloenz_LuxS/M16"/>
</dbReference>
<dbReference type="InterPro" id="IPR050361">
    <property type="entry name" value="MPP/UQCRC_Complex"/>
</dbReference>
<dbReference type="InterPro" id="IPR011765">
    <property type="entry name" value="Pept_M16_N"/>
</dbReference>
<dbReference type="InterPro" id="IPR007863">
    <property type="entry name" value="Peptidase_M16_C"/>
</dbReference>
<dbReference type="PANTHER" id="PTHR11851:SF209">
    <property type="entry name" value="CYTOCHROME B-C1 COMPLEX SUBUNIT 2, MITOCHONDRIAL"/>
    <property type="match status" value="1"/>
</dbReference>
<dbReference type="PANTHER" id="PTHR11851">
    <property type="entry name" value="METALLOPROTEASE"/>
    <property type="match status" value="1"/>
</dbReference>
<dbReference type="Pfam" id="PF00675">
    <property type="entry name" value="Peptidase_M16"/>
    <property type="match status" value="1"/>
</dbReference>
<dbReference type="Pfam" id="PF05193">
    <property type="entry name" value="Peptidase_M16_C"/>
    <property type="match status" value="1"/>
</dbReference>
<dbReference type="SUPFAM" id="SSF63411">
    <property type="entry name" value="LuxS/MPP-like metallohydrolase"/>
    <property type="match status" value="2"/>
</dbReference>
<comment type="function">
    <text evidence="7 12 13">Component of the ubiquinol-cytochrome c oxidoreductase, a multisubunit transmembrane complex that is part of the mitochondrial electron transport chain which drives oxidative phosphorylation. The respiratory chain contains 3 multisubunit complexes succinate dehydrogenase (complex II, CII), ubiquinol-cytochrome c oxidoreductase (cytochrome b-c1 complex, complex III, CIII) and cytochrome c oxidase (complex IV, CIV), that cooperate to transfer electrons derived from NADH and succinate to molecular oxygen, creating an electrochemical gradient over the inner membrane that drives transmembrane transport and the ATP synthase. The cytochrome b-c1 complex catalyzes electron transfer from ubiquinol to cytochrome c, linking this redox reaction to translocation of protons across the mitochondrial inner membrane, with protons being carried across the membrane as hydrogens on the quinol. In the process called Q cycle, 2 protons are consumed from the matrix, 4 protons are released into the intermembrane space and 2 electrons are passed to cytochrome c.</text>
</comment>
<comment type="subunit">
    <text evidence="3 4 5 6 8 9">Component of the ubiquinol-cytochrome c oxidoreductase (cytochrome b-c1 complex, complex III, CIII), a multisubunit enzyme composed of 10 subunits. The complex is composed of 3 respiratory subunits cytochrome b (cob), cytochrome c1 (cyt-1) and Rieske protein (fes-1), 2 core protein subunits pep and ucr-1, and 5 low-molecular weight protein subunits qcr6, qcr7, qcr8, qcr9 and probably NCU16844/qcr10 (PubMed:18251112, PubMed:226365, PubMed:6273583, PubMed:6302289). The complex exists as an obligatory dimer and forms supercomplexes (SCs) in the inner mitochondrial membrane with NADH-ubiquinone oxidoreductase (complex I, CI) and cytochrome c oxidase (complex IV, CIV), resulting in different assemblies (supercomplexes SCI(1)III(2), SCIII(2)IV(1) and SCIII(2)IV(2) as well as higher order I(x)III(y)IV(z) megacomplexes) (PubMed:17873079, PubMed:19239619).</text>
</comment>
<comment type="subcellular location">
    <subcellularLocation>
        <location evidence="6">Mitochondrion inner membrane</location>
        <topology evidence="1">Peripheral membrane protein</topology>
        <orientation evidence="1">Matrix side</orientation>
    </subcellularLocation>
</comment>
<comment type="disruption phenotype">
    <text evidence="5">Mutants display reduced growth, are female sterile and lack active complex III.</text>
</comment>
<comment type="similarity">
    <text evidence="11">Belongs to the peptidase M16 family. UQCRC2/QCR2 subfamily.</text>
</comment>
<comment type="caution">
    <text evidence="11">Does not seem to have protease activity as it lacks the zinc-binding site.</text>
</comment>
<reference key="1">
    <citation type="submission" date="1996-10" db="EMBL/GenBank/DDBJ databases">
        <title>The core II protein from Neurospora crassa.</title>
        <authorList>
            <person name="Brumme S."/>
            <person name="Schmitz U.K."/>
            <person name="Braun H.P."/>
        </authorList>
    </citation>
    <scope>NUCLEOTIDE SEQUENCE [MRNA]</scope>
</reference>
<reference key="2">
    <citation type="journal article" date="2003" name="Nucleic Acids Res.">
        <title>What's in the genome of a filamentous fungus? Analysis of the Neurospora genome sequence.</title>
        <authorList>
            <person name="Mannhaupt G."/>
            <person name="Montrone C."/>
            <person name="Haase D."/>
            <person name="Mewes H.-W."/>
            <person name="Aign V."/>
            <person name="Hoheisel J.D."/>
            <person name="Fartmann B."/>
            <person name="Nyakatura G."/>
            <person name="Kempken F."/>
            <person name="Maier J."/>
            <person name="Schulte U."/>
        </authorList>
    </citation>
    <scope>NUCLEOTIDE SEQUENCE [LARGE SCALE GENOMIC DNA]</scope>
    <source>
        <strain>ATCC 24698 / 74-OR23-1A / CBS 708.71 / DSM 1257 / FGSC 987</strain>
    </source>
</reference>
<reference key="3">
    <citation type="journal article" date="2003" name="Nature">
        <title>The genome sequence of the filamentous fungus Neurospora crassa.</title>
        <authorList>
            <person name="Galagan J.E."/>
            <person name="Calvo S.E."/>
            <person name="Borkovich K.A."/>
            <person name="Selker E.U."/>
            <person name="Read N.D."/>
            <person name="Jaffe D.B."/>
            <person name="FitzHugh W."/>
            <person name="Ma L.-J."/>
            <person name="Smirnov S."/>
            <person name="Purcell S."/>
            <person name="Rehman B."/>
            <person name="Elkins T."/>
            <person name="Engels R."/>
            <person name="Wang S."/>
            <person name="Nielsen C.B."/>
            <person name="Butler J."/>
            <person name="Endrizzi M."/>
            <person name="Qui D."/>
            <person name="Ianakiev P."/>
            <person name="Bell-Pedersen D."/>
            <person name="Nelson M.A."/>
            <person name="Werner-Washburne M."/>
            <person name="Selitrennikoff C.P."/>
            <person name="Kinsey J.A."/>
            <person name="Braun E.L."/>
            <person name="Zelter A."/>
            <person name="Schulte U."/>
            <person name="Kothe G.O."/>
            <person name="Jedd G."/>
            <person name="Mewes H.-W."/>
            <person name="Staben C."/>
            <person name="Marcotte E."/>
            <person name="Greenberg D."/>
            <person name="Roy A."/>
            <person name="Foley K."/>
            <person name="Naylor J."/>
            <person name="Stange-Thomann N."/>
            <person name="Barrett R."/>
            <person name="Gnerre S."/>
            <person name="Kamal M."/>
            <person name="Kamvysselis M."/>
            <person name="Mauceli E.W."/>
            <person name="Bielke C."/>
            <person name="Rudd S."/>
            <person name="Frishman D."/>
            <person name="Krystofova S."/>
            <person name="Rasmussen C."/>
            <person name="Metzenberg R.L."/>
            <person name="Perkins D.D."/>
            <person name="Kroken S."/>
            <person name="Cogoni C."/>
            <person name="Macino G."/>
            <person name="Catcheside D.E.A."/>
            <person name="Li W."/>
            <person name="Pratt R.J."/>
            <person name="Osmani S.A."/>
            <person name="DeSouza C.P.C."/>
            <person name="Glass N.L."/>
            <person name="Orbach M.J."/>
            <person name="Berglund J.A."/>
            <person name="Voelker R."/>
            <person name="Yarden O."/>
            <person name="Plamann M."/>
            <person name="Seiler S."/>
            <person name="Dunlap J.C."/>
            <person name="Radford A."/>
            <person name="Aramayo R."/>
            <person name="Natvig D.O."/>
            <person name="Alex L.A."/>
            <person name="Mannhaupt G."/>
            <person name="Ebbole D.J."/>
            <person name="Freitag M."/>
            <person name="Paulsen I."/>
            <person name="Sachs M.S."/>
            <person name="Lander E.S."/>
            <person name="Nusbaum C."/>
            <person name="Birren B.W."/>
        </authorList>
    </citation>
    <scope>NUCLEOTIDE SEQUENCE [LARGE SCALE GENOMIC DNA]</scope>
    <source>
        <strain>ATCC 24698 / 74-OR23-1A / CBS 708.71 / DSM 1257 / FGSC 987</strain>
    </source>
</reference>
<reference key="4">
    <citation type="journal article" date="1979" name="Eur. J. Biochem.">
        <title>Isolation of mitochondrial succinate: ubiquinone reductase, cytochrome c reductase and cytochrome c oxidase from Neurospora crassa using nonionic detergent.</title>
        <authorList>
            <person name="Weiss H."/>
            <person name="Kolb H.J."/>
        </authorList>
    </citation>
    <scope>SUBUNIT</scope>
    <scope>SUBCELLULAR LOCATION</scope>
</reference>
<reference key="5">
    <citation type="journal article" date="1981" name="J. Mol. Biol.">
        <title>Three-dimensional structure of ubiquinol:cytochrome c reductase from Neurospora mitochondria determined by electron microscopy of membrane crystals.</title>
        <authorList>
            <person name="Leonard K."/>
            <person name="Wingfield P."/>
            <person name="Arad T."/>
            <person name="Weiss H."/>
        </authorList>
    </citation>
    <scope>SUBUNIT</scope>
</reference>
<reference key="6">
    <citation type="journal article" date="1983" name="J. Bioenerg. Biomembr.">
        <title>Comparative study of the peptide composition of Complex III (quinol-cytochrome c reductase).</title>
        <authorList>
            <person name="Mendel-Hartvig I."/>
            <person name="Nelson B.D."/>
        </authorList>
    </citation>
    <scope>SUBUNIT</scope>
</reference>
<reference key="7">
    <citation type="journal article" date="1983" name="J. Mol. Biol.">
        <title>Structural studies of cytochrome reductase. Subunit topography determined by electron microscopy of membrane crystals of a subcomplex.</title>
        <authorList>
            <person name="Karlsson B."/>
            <person name="Hovmoeller S."/>
            <person name="Weiss H."/>
            <person name="Leonard K."/>
        </authorList>
    </citation>
    <scope>SUBUNIT</scope>
</reference>
<reference key="8">
    <citation type="journal article" date="1986" name="Eur. J. Biochem.">
        <title>Dimeric ubiquinol:cytochrome c reductase of Neurospora mitochondria contains one cooperative ubiquinone-reduction centre.</title>
        <authorList>
            <person name="Linke P."/>
            <person name="Bechmann G."/>
            <person name="Gothe A."/>
            <person name="Weiss H."/>
        </authorList>
    </citation>
    <scope>FUNCTION OF COMPLEX III</scope>
</reference>
<reference key="9">
    <citation type="journal article" date="1991" name="Eur. J. Biochem.">
        <title>Regulation of the proton/electron stoichiometry of mitochondrial ubiquinol:cytochrome c reductase by the membrane potential.</title>
        <authorList>
            <person name="Bechmann G."/>
            <person name="Weiss H."/>
        </authorList>
    </citation>
    <scope>FUNCTION OF COMPLEX III</scope>
</reference>
<reference key="10">
    <citation type="journal article" date="2007" name="Eukaryot. Cell">
        <title>Supramolecular organization of the respiratory chain in Neurospora crassa mitochondria.</title>
        <authorList>
            <person name="Marques I."/>
            <person name="Dencher N.A."/>
            <person name="Videira A."/>
            <person name="Krause F."/>
        </authorList>
    </citation>
    <scope>COMPOSITION OF THE RESPIRATORY COMPLEX III</scope>
    <scope>IDENTIFICATION BY MASS SPECTROMETRY</scope>
</reference>
<reference key="11">
    <citation type="journal article" date="2009" name="Mol. Microbiol.">
        <title>Effects of mitochondrial complex III disruption in the respiratory chain of Neurospora crassa.</title>
        <authorList>
            <person name="Duarte M."/>
            <person name="Videira A."/>
        </authorList>
    </citation>
    <scope>FUNCTION OF COMPLEX III</scope>
    <scope>SUBUNIT</scope>
    <scope>DISRUPTION PHENOTYPE</scope>
</reference>
<protein>
    <recommendedName>
        <fullName>Cytochrome b-c1 complex subunit 2, mitochondrial</fullName>
    </recommendedName>
    <alternativeName>
        <fullName evidence="10">Complex III subunit II</fullName>
    </alternativeName>
    <alternativeName>
        <fullName>Core protein II</fullName>
    </alternativeName>
    <alternativeName>
        <fullName>Ubiquinol-cytochrome c oxidoreductase complex core protein 2</fullName>
    </alternativeName>
    <alternativeName>
        <fullName>Ubiquinol-cytochrome c reductase complex 45 kDa protein</fullName>
    </alternativeName>
</protein>
<organism>
    <name type="scientific">Neurospora crassa (strain ATCC 24698 / 74-OR23-1A / CBS 708.71 / DSM 1257 / FGSC 987)</name>
    <dbReference type="NCBI Taxonomy" id="367110"/>
    <lineage>
        <taxon>Eukaryota</taxon>
        <taxon>Fungi</taxon>
        <taxon>Dikarya</taxon>
        <taxon>Ascomycota</taxon>
        <taxon>Pezizomycotina</taxon>
        <taxon>Sordariomycetes</taxon>
        <taxon>Sordariomycetidae</taxon>
        <taxon>Sordariales</taxon>
        <taxon>Sordariaceae</taxon>
        <taxon>Neurospora</taxon>
    </lineage>
</organism>
<proteinExistence type="evidence at protein level"/>
<keyword id="KW-0249">Electron transport</keyword>
<keyword id="KW-0472">Membrane</keyword>
<keyword id="KW-0496">Mitochondrion</keyword>
<keyword id="KW-0999">Mitochondrion inner membrane</keyword>
<keyword id="KW-1185">Reference proteome</keyword>
<keyword id="KW-0679">Respiratory chain</keyword>
<keyword id="KW-0809">Transit peptide</keyword>
<keyword id="KW-0813">Transport</keyword>